<accession>P09310</accession>
<sequence>MDTPPMQRSTPQRAGSPDTLELMDLLDAAAAAAEHRARVVTSSQPDDLLFGENGVMVGREHEIVSIPSVSGLQPEPRTEDVGEELTQDDYVCEDGQDLMGSPVIPLAEVFHTRFSEAGAREPTGADRSLETVSLGTKLARSPKPPMNDGETGRGTTPPFPQAFSPVSPASPVGDAAGNDQREDQRSIPRQTTRGNSPGLPSVVHRDRQTQSISGKKPGDEQAGHAHASGDGVVLQKTQRPAQGKSPKKKTLKVKVPLPARKPGGPVPGPVEQLYHVLSDSVPAKGAKADLPFETDDTRPRKHDARGITPRVPGRSSGGKPRAFLALPGRSHAPDPIEDDSPVEKKPKSREFVSSSSSSSSWGSSSEDEDDEPRRVSVGSETTGSRSGREHAPSPSNSDDSDSNDGGSTKQNIQPGYRSISGPDPRIRKTKRLAGEPGRQRQKSFSLPRSRTPIIPPVSGPLMMPDGSPWPGSAPLPSNRVRFGPSGETREGHWEDEAVRAARARYEASTEPVPLYVPELGDPARQYRALINLIYCPDRDPIAWLQNPKLTGVNSALNQFYQKLLPPGRAGTAVTGSVASPVPHVGEAMATGEALWALPHAAAAVAMSRRYDRAQKHFILQSLRRAFASMAYPEATGSSPAARISRGHPSPTTPATQAPDPQPSAAARSLSVCPPDDRLRTPRKRKSQPVESRSLLDKIRETPVADARVADDHVVSKAKRRVSEPVTITSGPVVDPPAVITMPLDGPAPNGGFRRIPRGALHTPVPSDQARKAYCTPETIARLVDDPLFPTAWRPALSFDPGALAEIAARRPGGGDRRFGPPSGVEALRRRCAWMRQIPDPEDVRLLIIYDPLPGEDINGPLESTLATDPGPSWSPSRGGLSVVLAALSNRLCLPSTHAWAGNWTGPPDVSALNARGVLLLSTRDLAFAGAVEYLGSRLASARRRLLVLDAVALERWPRDGPALSQYHVYVRAPARPDAQAVVRWPDSAVTEGLARAVFASSRTFGPASFARIETAFANLYPGEQPLCLCRGGNVAYTVCTRAGPKTRVPLSPREYRQYVLPGFDGCKDLARQSRGLGLGAADFVDEAAHSHRAANRWGLGAALRPVFLPEGRRPGAAGPEAGDVPTWARVFCRHALLEPDPAAEPLVLPPVAGRSVALYASADEARNALPPIPRVMWPPGFGAAETVLEGSDGTRFVFGHHGGSERPSETQAGRQRRTADDREHALELDDWEVGCEDAWDSEEGGGDDGDAPGSSFGVSIVSVAPGVLRDRRVGLRPAVKVELLSSSSSSEDEDDVWGGRGGRSPPQSRG</sequence>
<evidence type="ECO:0000250" key="1"/>
<evidence type="ECO:0000255" key="2"/>
<evidence type="ECO:0000256" key="3">
    <source>
        <dbReference type="SAM" id="MobiDB-lite"/>
    </source>
</evidence>
<evidence type="ECO:0000269" key="4">
    <source>
    </source>
</evidence>
<evidence type="ECO:0000269" key="5">
    <source>
    </source>
</evidence>
<evidence type="ECO:0000269" key="6">
    <source>
    </source>
</evidence>
<evidence type="ECO:0000269" key="7">
    <source>
    </source>
</evidence>
<evidence type="ECO:0000269" key="8">
    <source>
    </source>
</evidence>
<evidence type="ECO:0000269" key="9">
    <source>
    </source>
</evidence>
<evidence type="ECO:0000269" key="10">
    <source>
    </source>
</evidence>
<evidence type="ECO:0000269" key="11">
    <source>
    </source>
</evidence>
<evidence type="ECO:0000269" key="12">
    <source>
    </source>
</evidence>
<evidence type="ECO:0000269" key="13">
    <source>
    </source>
</evidence>
<evidence type="ECO:0000305" key="14"/>
<gene>
    <name type="ORF">ORF62</name>
</gene>
<gene>
    <name type="ORF">ORF71</name>
</gene>
<organismHost>
    <name type="scientific">Homo sapiens</name>
    <name type="common">Human</name>
    <dbReference type="NCBI Taxonomy" id="9606"/>
</organismHost>
<feature type="chain" id="PRO_0000115820" description="Major viral transcription factor ICP4 homolog">
    <location>
        <begin position="1"/>
        <end position="1310"/>
    </location>
</feature>
<feature type="region of interest" description="Disordered" evidence="3">
    <location>
        <begin position="117"/>
        <end position="271"/>
    </location>
</feature>
<feature type="region of interest" description="Disordered" evidence="3">
    <location>
        <begin position="285"/>
        <end position="454"/>
    </location>
</feature>
<feature type="region of interest" description="Disordered" evidence="3">
    <location>
        <begin position="636"/>
        <end position="697"/>
    </location>
</feature>
<feature type="region of interest" description="Disordered" evidence="3">
    <location>
        <begin position="1193"/>
        <end position="1258"/>
    </location>
</feature>
<feature type="region of interest" description="Disordered" evidence="3">
    <location>
        <begin position="1282"/>
        <end position="1310"/>
    </location>
</feature>
<feature type="short sequence motif" description="Nuclear localization signal" evidence="2">
    <location>
        <begin position="677"/>
        <end position="685"/>
    </location>
</feature>
<feature type="compositionally biased region" description="Basic and acidic residues" evidence="3">
    <location>
        <begin position="341"/>
        <end position="350"/>
    </location>
</feature>
<feature type="compositionally biased region" description="Low complexity" evidence="3">
    <location>
        <begin position="351"/>
        <end position="364"/>
    </location>
</feature>
<feature type="compositionally biased region" description="Low complexity" evidence="3">
    <location>
        <begin position="392"/>
        <end position="407"/>
    </location>
</feature>
<feature type="compositionally biased region" description="Low complexity" evidence="3">
    <location>
        <begin position="648"/>
        <end position="666"/>
    </location>
</feature>
<feature type="compositionally biased region" description="Basic and acidic residues" evidence="3">
    <location>
        <begin position="1217"/>
        <end position="1227"/>
    </location>
</feature>
<feature type="compositionally biased region" description="Acidic residues" evidence="3">
    <location>
        <begin position="1228"/>
        <end position="1250"/>
    </location>
</feature>
<feature type="modified residue" description="Phosphoserine; by viral VZV ORF66" evidence="11">
    <location>
        <position position="686"/>
    </location>
</feature>
<feature type="modified residue" description="Phosphoserine; by viral VZV ORF66" evidence="11">
    <location>
        <position position="722"/>
    </location>
</feature>
<feature type="mutagenesis site" description="Decreases DNA-binding." evidence="13">
    <original>Q</original>
    <variation>L</variation>
    <location>
        <position position="545"/>
    </location>
</feature>
<feature type="mutagenesis site" description="Decreases DNA-binding." evidence="13">
    <original>N</original>
    <variation>L</variation>
    <location>
        <position position="546"/>
    </location>
</feature>
<feature type="mutagenesis site" description="Complete loss of DNA-binding." evidence="13">
    <original>K</original>
    <variation>E</variation>
    <location>
        <position position="548"/>
    </location>
</feature>
<organism>
    <name type="scientific">Varicella-zoster virus (strain Dumas)</name>
    <name type="common">HHV-3</name>
    <name type="synonym">Human herpesvirus 3</name>
    <dbReference type="NCBI Taxonomy" id="10338"/>
    <lineage>
        <taxon>Viruses</taxon>
        <taxon>Duplodnaviria</taxon>
        <taxon>Heunggongvirae</taxon>
        <taxon>Peploviricota</taxon>
        <taxon>Herviviricetes</taxon>
        <taxon>Herpesvirales</taxon>
        <taxon>Orthoherpesviridae</taxon>
        <taxon>Alphaherpesvirinae</taxon>
        <taxon>Varicellovirus</taxon>
        <taxon>Varicellovirus humanalpha3</taxon>
        <taxon>Human herpesvirus 3</taxon>
    </lineage>
</organism>
<protein>
    <recommendedName>
        <fullName>Major viral transcription factor ICP4 homolog</fullName>
    </recommendedName>
    <alternativeName>
        <fullName>Immediate-early protein 62</fullName>
        <shortName>IE62</shortName>
    </alternativeName>
</protein>
<comment type="function">
    <text evidence="12">Transcriptional transactivator. May interact with and recruit specific components of the general transcription machinery to viral promoters and stabilize their formation for transcription initiation. Negatively regulates its own transcription. This immediate early (EI) protein may be necessary in virion for viral pathogenesis.</text>
</comment>
<comment type="subunit">
    <text evidence="5 8 9 10">Interacts with IE4 and IE63. Interacts with host USF1 and SP1.</text>
</comment>
<comment type="subcellular location">
    <subcellularLocation>
        <location evidence="1">Host nucleus</location>
    </subcellularLocation>
    <subcellularLocation>
        <location evidence="1">Host cytoplasm</location>
    </subcellularLocation>
    <subcellularLocation>
        <location evidence="1">Virion tegument</location>
    </subcellularLocation>
    <text evidence="4 7">Localizes to the cytoplasm when phosphorylated.</text>
</comment>
<comment type="PTM">
    <text evidence="6 11">Phosphorylated by ORF66 protein kinase on Ser-686 and Ser-722. Also phosphorylated by ORF47 protein kinase and by human CSNK2A1/CKII.</text>
</comment>
<comment type="miscellaneous">
    <text>Encoded both by ORF62 and ORF71 within the inverted repeat sequences bounding the Us region of the VZV genome.</text>
</comment>
<comment type="similarity">
    <text evidence="14">Belongs to the herpesviridae ICP4 family.</text>
</comment>
<keyword id="KW-0010">Activator</keyword>
<keyword id="KW-0238">DNA-binding</keyword>
<keyword id="KW-0244">Early protein</keyword>
<keyword id="KW-1035">Host cytoplasm</keyword>
<keyword id="KW-1048">Host nucleus</keyword>
<keyword id="KW-0597">Phosphoprotein</keyword>
<keyword id="KW-1185">Reference proteome</keyword>
<keyword id="KW-0804">Transcription</keyword>
<keyword id="KW-0805">Transcription regulation</keyword>
<keyword id="KW-0946">Virion</keyword>
<keyword id="KW-0920">Virion tegument</keyword>
<name>ICP4_VZVD</name>
<reference key="1">
    <citation type="journal article" date="1986" name="J. Gen. Virol.">
        <title>The complete DNA sequence of varicella-zoster virus.</title>
        <authorList>
            <person name="Davison A.J."/>
            <person name="Scott J.E."/>
        </authorList>
    </citation>
    <scope>NUCLEOTIDE SEQUENCE [LARGE SCALE GENOMIC DNA]</scope>
</reference>
<reference key="2">
    <citation type="journal article" date="1985" name="J. Gen. Virol.">
        <title>DNA sequence of the major inverted repeat in the varicella-zoster virus genome.</title>
        <authorList>
            <person name="Davison A.J."/>
            <person name="Scott J.E."/>
        </authorList>
    </citation>
    <scope>NUCLEOTIDE SEQUENCE [GENOMIC DNA]</scope>
</reference>
<reference key="3">
    <citation type="journal article" date="1987" name="J. Virol.">
        <title>Varicella-zoster virus complements herpes simplex virus type 1 temperature-sensitive mutants.</title>
        <authorList>
            <person name="Felser J.M."/>
            <person name="Straus S.E."/>
            <person name="Ostrove J.M."/>
        </authorList>
    </citation>
    <scope>CHARACTERIZATION</scope>
</reference>
<reference key="4">
    <citation type="journal article" date="1988" name="J. Virol.">
        <title>Cell lines containing varicella-zoster virus open reading frame 62 and expressing the 'IE' 175 protein complement ICP4 mutants of herpes simplex virus type 1.</title>
        <authorList>
            <person name="Felser J.M."/>
            <person name="Kinchington P.R."/>
            <person name="Inchauspe G."/>
            <person name="Straus S.E."/>
            <person name="Ostrove J.M."/>
        </authorList>
    </citation>
    <scope>FUNCTION</scope>
</reference>
<reference key="5">
    <citation type="journal article" date="1994" name="Nucleic Acids Res.">
        <title>Mutation of a single lysine residue severely impairs the DNA recognition and regulatory functions of the VZV gene 62 transactivator protein.</title>
        <authorList>
            <person name="Tyler J.K."/>
            <person name="Allen K.E."/>
            <person name="Everett R.D."/>
        </authorList>
    </citation>
    <scope>MUTAGENESIS OF GLN-545; ASN-546 AND LYS-548</scope>
</reference>
<reference key="6">
    <citation type="journal article" date="2000" name="Virology">
        <title>Physical interaction between two varicella zoster virus gene regulatory proteins, IE4 and IE62.</title>
        <authorList>
            <person name="Spengler M.L."/>
            <person name="Ruyechan W.T."/>
            <person name="Hay J."/>
        </authorList>
    </citation>
    <scope>INTERACTION WITH IE4</scope>
</reference>
<reference key="7">
    <citation type="journal article" date="2000" name="J. Virol.">
        <title>Nuclear accumulation of IE62, the varicella-zoster virus (VZV) major transcriptional regulatory protein, is inhibited by phosphorylation mediated by the VZV open reading frame 66 protein kinase.</title>
        <authorList>
            <person name="Kinchington P.R."/>
            <person name="Fite K."/>
            <person name="Turse S.E."/>
        </authorList>
    </citation>
    <scope>SUBCELLULAR LOCATION</scope>
</reference>
<reference key="8">
    <citation type="journal article" date="2001" name="J. Virol.">
        <title>Virion association of IE62, the varicella-zoster virus (VZV) major transcriptional regulatory protein, requires expression of the VZV open reading frame 66 protein kinase.</title>
        <authorList>
            <person name="Kinchington P.R."/>
            <person name="Fite K."/>
            <person name="Seman A."/>
            <person name="Turse S.E."/>
        </authorList>
    </citation>
    <scope>SUBCELLULAR LOCATION</scope>
</reference>
<reference key="9">
    <citation type="journal article" date="2001" name="J. Virol.">
        <title>Varicella-zoster virus ORF47 protein serine kinase: characterization of a cloned, biologically active phosphotransferase and two viral substrates, ORF62 and ORF63.</title>
        <authorList>
            <person name="Kenyon T.K."/>
            <person name="Lynch J.M."/>
            <person name="Hay J."/>
            <person name="Ruyechan W.T."/>
            <person name="Grose C."/>
        </authorList>
    </citation>
    <scope>PHOSPHORYLATION</scope>
</reference>
<reference key="10">
    <citation type="journal article" date="2002" name="Virology">
        <title>Physical and functional interaction between the varicella zoster virus IE63 and IE62 proteins.</title>
        <authorList>
            <person name="Lynch J.M."/>
            <person name="Kenyon T.K."/>
            <person name="Grose C."/>
            <person name="Hay J."/>
            <person name="Ruyechan W.T."/>
        </authorList>
    </citation>
    <scope>INTERACTION WITH IE63</scope>
</reference>
<reference key="11">
    <citation type="journal article" date="2003" name="J. Gen. Virol.">
        <title>Transcription factor USF, expressed during the entire phase of Varicella-zoster virus infection, interacts physically with the major viral transactivator IE62 and plays a significant role in virus replication.</title>
        <authorList>
            <person name="Rahaus M."/>
            <person name="Desloges N."/>
            <person name="Yang M."/>
            <person name="Ruyechan W.T."/>
            <person name="Wolff M.H."/>
        </authorList>
    </citation>
    <scope>INTERACTION WITH HUMAN USF1 PROTEIN</scope>
</reference>
<reference key="12">
    <citation type="journal article" date="2003" name="J. Biol. Chem.">
        <title>Interaction between the varicella zoster virus IE62 major transactivator and cellular transcription factor Sp1.</title>
        <authorList>
            <person name="Peng H."/>
            <person name="He H."/>
            <person name="Hay J."/>
            <person name="Ruyechan W.T."/>
        </authorList>
    </citation>
    <scope>INTERACTION WITH HUMAN SP1 PROTEIN</scope>
</reference>
<reference key="13">
    <citation type="journal article" date="2006" name="J. Virol.">
        <title>Phosphorylation of the varicella-zoster virus (VZV) major transcriptional regulatory protein IE62 by the VZV open reading frame 66 protein kinase.</title>
        <authorList>
            <person name="Eisfeld A.J."/>
            <person name="Turse S.E."/>
            <person name="Jackson S.A."/>
            <person name="Lerner E.C."/>
            <person name="Kinchington P.R."/>
        </authorList>
    </citation>
    <scope>NUCLEAR LOCALIZATION SIGNAL</scope>
    <scope>PHOSPHORYLATION AT SER-686 AND SER-722</scope>
</reference>
<dbReference type="EMBL" id="X04370">
    <property type="protein sequence ID" value="CAA27954.1"/>
    <property type="molecule type" value="Genomic_DNA"/>
</dbReference>
<dbReference type="EMBL" id="X04370">
    <property type="protein sequence ID" value="CAA27945.1"/>
    <property type="molecule type" value="Genomic_DNA"/>
</dbReference>
<dbReference type="EMBL" id="X02132">
    <property type="protein sequence ID" value="CAA26044.1"/>
    <property type="molecule type" value="Genomic_DNA"/>
</dbReference>
<dbReference type="PIR" id="A27345">
    <property type="entry name" value="WZBE62"/>
</dbReference>
<dbReference type="RefSeq" id="NP_040184.1">
    <property type="nucleotide sequence ID" value="NC_001348.1"/>
</dbReference>
<dbReference type="RefSeq" id="NP_040193.1">
    <property type="nucleotide sequence ID" value="NC_001348.1"/>
</dbReference>
<dbReference type="SMR" id="P09310"/>
<dbReference type="BioGRID" id="971518">
    <property type="interactions" value="2"/>
</dbReference>
<dbReference type="iPTMnet" id="P09310"/>
<dbReference type="DNASU" id="1487699"/>
<dbReference type="GeneID" id="1487695"/>
<dbReference type="GeneID" id="1487699"/>
<dbReference type="KEGG" id="vg:1487695"/>
<dbReference type="KEGG" id="vg:1487699"/>
<dbReference type="Proteomes" id="UP000002602">
    <property type="component" value="Genome"/>
</dbReference>
<dbReference type="GO" id="GO:0030430">
    <property type="term" value="C:host cell cytoplasm"/>
    <property type="evidence" value="ECO:0007669"/>
    <property type="project" value="UniProtKB-SubCell"/>
</dbReference>
<dbReference type="GO" id="GO:0042025">
    <property type="term" value="C:host cell nucleus"/>
    <property type="evidence" value="ECO:0007669"/>
    <property type="project" value="UniProtKB-SubCell"/>
</dbReference>
<dbReference type="GO" id="GO:0019033">
    <property type="term" value="C:viral tegument"/>
    <property type="evidence" value="ECO:0007669"/>
    <property type="project" value="UniProtKB-SubCell"/>
</dbReference>
<dbReference type="GO" id="GO:0003677">
    <property type="term" value="F:DNA binding"/>
    <property type="evidence" value="ECO:0007669"/>
    <property type="project" value="UniProtKB-KW"/>
</dbReference>
<dbReference type="GO" id="GO:0039695">
    <property type="term" value="P:DNA-templated viral transcription"/>
    <property type="evidence" value="ECO:0000314"/>
    <property type="project" value="UniProtKB"/>
</dbReference>
<dbReference type="GO" id="GO:0045893">
    <property type="term" value="P:positive regulation of DNA-templated transcription"/>
    <property type="evidence" value="ECO:0007669"/>
    <property type="project" value="InterPro"/>
</dbReference>
<dbReference type="InterPro" id="IPR005205">
    <property type="entry name" value="Herpes_ICP4_C"/>
</dbReference>
<dbReference type="InterPro" id="IPR005206">
    <property type="entry name" value="Herpes_ICP4_N"/>
</dbReference>
<dbReference type="Pfam" id="PF03585">
    <property type="entry name" value="Herpes_ICP4_C"/>
    <property type="match status" value="1"/>
</dbReference>
<dbReference type="Pfam" id="PF03584">
    <property type="entry name" value="Herpes_ICP4_N"/>
    <property type="match status" value="1"/>
</dbReference>
<proteinExistence type="evidence at protein level"/>